<protein>
    <recommendedName>
        <fullName>Ribulose bisphosphate carboxylase large chain</fullName>
        <shortName>RuBisCO large subunit</shortName>
        <ecNumber>4.1.1.39</ecNumber>
    </recommendedName>
</protein>
<accession>P06292</accession>
<name>RBL_MARPO</name>
<gene>
    <name type="primary">rbcL</name>
</gene>
<sequence length="475" mass="52791">MSPQTETKAGVGFKAGVKDYRLTYYTPDYETKDTDILAAFRMTPQPGVPAEEAGNAVAAESSTGTWTTVWTDGLTNLDRYKGRCYDIDPVPGEENQYIAYVAYPLDLFEEGSVTNMFTSIVGNVFGFKALRALRLEDLRIPPAYTKTFQGPPHGIQVERDKLNKYGRPLLGCTIKPKLGLSAKNYGRAVYECLRGGLDFTKDDENVNSQPFMRWRDRFLFVAEAIYKSQAETGEIKGHYLNATAGTCEEMLKRAACARELGVPIVMHDYLTGGFTANTSLAFYCRDNGLLLHIHRAMHAVIDRQKNHGIHFRVLAKALRMSGGDHIHAGTVVGKLEGDRQVTLGFVDLLRDDYIEKDRSRGIYFTQDWVSLPGVFPVASGGIHVWHMPALTEIFGDDSVLQFGGGTLGHPWGNAPGAVANRVSLEACVQARNEGRDLAREGNEIIREACKWSPELSAACEIWKEIKFEFDIIDTL</sequence>
<proteinExistence type="evidence at protein level"/>
<feature type="propeptide" id="PRO_0000031299" evidence="2">
    <location>
        <begin position="1"/>
        <end position="2"/>
    </location>
</feature>
<feature type="chain" id="PRO_0000031300" description="Ribulose bisphosphate carboxylase large chain">
    <location>
        <begin position="3"/>
        <end position="475"/>
    </location>
</feature>
<feature type="active site" description="Proton acceptor" evidence="1">
    <location>
        <position position="175"/>
    </location>
</feature>
<feature type="active site" description="Proton acceptor" evidence="1">
    <location>
        <position position="294"/>
    </location>
</feature>
<feature type="binding site" description="in homodimeric partner" evidence="1">
    <location>
        <position position="123"/>
    </location>
    <ligand>
        <name>substrate</name>
    </ligand>
</feature>
<feature type="binding site" evidence="1">
    <location>
        <position position="173"/>
    </location>
    <ligand>
        <name>substrate</name>
    </ligand>
</feature>
<feature type="binding site" evidence="1">
    <location>
        <position position="177"/>
    </location>
    <ligand>
        <name>substrate</name>
    </ligand>
</feature>
<feature type="binding site" description="via carbamate group" evidence="1">
    <location>
        <position position="201"/>
    </location>
    <ligand>
        <name>Mg(2+)</name>
        <dbReference type="ChEBI" id="CHEBI:18420"/>
    </ligand>
</feature>
<feature type="binding site" evidence="1">
    <location>
        <position position="203"/>
    </location>
    <ligand>
        <name>Mg(2+)</name>
        <dbReference type="ChEBI" id="CHEBI:18420"/>
    </ligand>
</feature>
<feature type="binding site" evidence="1">
    <location>
        <position position="204"/>
    </location>
    <ligand>
        <name>Mg(2+)</name>
        <dbReference type="ChEBI" id="CHEBI:18420"/>
    </ligand>
</feature>
<feature type="binding site" evidence="1">
    <location>
        <position position="295"/>
    </location>
    <ligand>
        <name>substrate</name>
    </ligand>
</feature>
<feature type="binding site" evidence="1">
    <location>
        <position position="327"/>
    </location>
    <ligand>
        <name>substrate</name>
    </ligand>
</feature>
<feature type="binding site" evidence="1">
    <location>
        <position position="379"/>
    </location>
    <ligand>
        <name>substrate</name>
    </ligand>
</feature>
<feature type="site" description="Transition state stabilizer" evidence="1">
    <location>
        <position position="334"/>
    </location>
</feature>
<feature type="modified residue" description="N-acetylproline" evidence="2">
    <location>
        <position position="3"/>
    </location>
</feature>
<feature type="modified residue" description="N6,N6,N6-trimethyllysine" evidence="1">
    <location>
        <position position="14"/>
    </location>
</feature>
<feature type="modified residue" description="N6-carboxylysine" evidence="1">
    <location>
        <position position="201"/>
    </location>
</feature>
<feature type="disulfide bond" description="Interchain; in linked form" evidence="1">
    <location>
        <position position="247"/>
    </location>
</feature>
<organism>
    <name type="scientific">Marchantia polymorpha</name>
    <name type="common">Common liverwort</name>
    <name type="synonym">Marchantia aquatica</name>
    <dbReference type="NCBI Taxonomy" id="3197"/>
    <lineage>
        <taxon>Eukaryota</taxon>
        <taxon>Viridiplantae</taxon>
        <taxon>Streptophyta</taxon>
        <taxon>Embryophyta</taxon>
        <taxon>Marchantiophyta</taxon>
        <taxon>Marchantiopsida</taxon>
        <taxon>Marchantiidae</taxon>
        <taxon>Marchantiales</taxon>
        <taxon>Marchantiaceae</taxon>
        <taxon>Marchantia</taxon>
    </lineage>
</organism>
<comment type="function">
    <text>RuBisCO catalyzes two reactions: the carboxylation of D-ribulose 1,5-bisphosphate, the primary event in carbon dioxide fixation, as well as the oxidative fragmentation of the pentose substrate in the photorespiration process. Both reactions occur simultaneously and in competition at the same active site.</text>
</comment>
<comment type="catalytic activity">
    <reaction>
        <text>2 (2R)-3-phosphoglycerate + 2 H(+) = D-ribulose 1,5-bisphosphate + CO2 + H2O</text>
        <dbReference type="Rhea" id="RHEA:23124"/>
        <dbReference type="ChEBI" id="CHEBI:15377"/>
        <dbReference type="ChEBI" id="CHEBI:15378"/>
        <dbReference type="ChEBI" id="CHEBI:16526"/>
        <dbReference type="ChEBI" id="CHEBI:57870"/>
        <dbReference type="ChEBI" id="CHEBI:58272"/>
        <dbReference type="EC" id="4.1.1.39"/>
    </reaction>
</comment>
<comment type="catalytic activity">
    <reaction>
        <text>D-ribulose 1,5-bisphosphate + O2 = 2-phosphoglycolate + (2R)-3-phosphoglycerate + 2 H(+)</text>
        <dbReference type="Rhea" id="RHEA:36631"/>
        <dbReference type="ChEBI" id="CHEBI:15378"/>
        <dbReference type="ChEBI" id="CHEBI:15379"/>
        <dbReference type="ChEBI" id="CHEBI:57870"/>
        <dbReference type="ChEBI" id="CHEBI:58033"/>
        <dbReference type="ChEBI" id="CHEBI:58272"/>
    </reaction>
</comment>
<comment type="cofactor">
    <cofactor evidence="1">
        <name>Mg(2+)</name>
        <dbReference type="ChEBI" id="CHEBI:18420"/>
    </cofactor>
    <text evidence="1">Binds 1 Mg(2+) ion per subunit.</text>
</comment>
<comment type="subunit">
    <text evidence="1">Heterohexadecamer of 8 large chains and 8 small chains; disulfide-linked. The disulfide link is formed within the large subunit homodimers (By similarity).</text>
</comment>
<comment type="subcellular location">
    <subcellularLocation>
        <location>Plastid</location>
        <location>Chloroplast</location>
    </subcellularLocation>
</comment>
<comment type="PTM">
    <text evidence="1">The disulfide bond which can form in the large chain dimeric partners within the hexadecamer appears to be associated with oxidative stress and protein turnover.</text>
</comment>
<comment type="miscellaneous">
    <text evidence="1">The basic functional RuBisCO is composed of a large chain homodimer in a 'head-to-tail' conformation. In form I RuBisCO this homodimer is arranged in a barrel-like tetramer with the small subunits forming a tetrameric 'cap' on each end of the 'barrel' (By similarity).</text>
</comment>
<comment type="similarity">
    <text evidence="3">Belongs to the RuBisCO large chain family. Type I subfamily.</text>
</comment>
<reference key="1">
    <citation type="journal article" date="1988" name="J. Mol. Biol.">
        <title>Structure and organization of Marchantia polymorpha chloroplast genome. III. Gene organization of the large single copy region from rbcL to trnI(CAU).</title>
        <authorList>
            <person name="Fukuzawa H."/>
            <person name="Kohchi T."/>
            <person name="Sano T."/>
            <person name="Shirai H."/>
            <person name="Umesono K."/>
            <person name="Inokuchi H."/>
            <person name="Ozeki H."/>
            <person name="Ohyama K."/>
        </authorList>
    </citation>
    <scope>NUCLEOTIDE SEQUENCE [GENOMIC DNA]</scope>
</reference>
<reference key="2">
    <citation type="journal article" date="1986" name="Nature">
        <title>Chloroplast gene organization deduced from complete sequence of liverwort Marchantia polymorpha chloroplast DNA.</title>
        <authorList>
            <person name="Ohyama K."/>
            <person name="Fukuzawa H."/>
            <person name="Kohchi T."/>
            <person name="Shirai H."/>
            <person name="Sano T."/>
            <person name="Sano S."/>
            <person name="Umesono K."/>
            <person name="Shiki Y."/>
            <person name="Takeuchi M."/>
            <person name="Chang Z."/>
            <person name="Aota S."/>
            <person name="Inokuchi H."/>
            <person name="Ozeki H."/>
        </authorList>
    </citation>
    <scope>NUCLEOTIDE SEQUENCE [LARGE SCALE GENOMIC DNA]</scope>
</reference>
<reference key="3">
    <citation type="journal article" date="1992" name="Plant Physiol.">
        <title>Posttranslational modifications in the amino-terminal region of the large subunit of ribulose-1,5-bisphosphate carboxylase/oxygenase from several plant species.</title>
        <authorList>
            <person name="Houtz R.L."/>
            <person name="Poneleit L."/>
            <person name="Jones S.B."/>
            <person name="Royer M."/>
            <person name="Stults J.T."/>
        </authorList>
    </citation>
    <scope>PROTEIN SEQUENCE OF 3-14</scope>
    <scope>ACETYLATION AT PRO-3</scope>
</reference>
<dbReference type="EC" id="4.1.1.39"/>
<dbReference type="EMBL" id="X04465">
    <property type="protein sequence ID" value="CAA28092.1"/>
    <property type="molecule type" value="Genomic_DNA"/>
</dbReference>
<dbReference type="PIR" id="S01529">
    <property type="entry name" value="RKLVL"/>
</dbReference>
<dbReference type="RefSeq" id="NP_039306.1">
    <property type="nucleotide sequence ID" value="NC_001319.1"/>
</dbReference>
<dbReference type="SMR" id="P06292"/>
<dbReference type="iPTMnet" id="P06292"/>
<dbReference type="GeneID" id="2702554"/>
<dbReference type="GO" id="GO:0009507">
    <property type="term" value="C:chloroplast"/>
    <property type="evidence" value="ECO:0007669"/>
    <property type="project" value="UniProtKB-SubCell"/>
</dbReference>
<dbReference type="GO" id="GO:0000287">
    <property type="term" value="F:magnesium ion binding"/>
    <property type="evidence" value="ECO:0007669"/>
    <property type="project" value="UniProtKB-UniRule"/>
</dbReference>
<dbReference type="GO" id="GO:0004497">
    <property type="term" value="F:monooxygenase activity"/>
    <property type="evidence" value="ECO:0007669"/>
    <property type="project" value="UniProtKB-KW"/>
</dbReference>
<dbReference type="GO" id="GO:0016984">
    <property type="term" value="F:ribulose-bisphosphate carboxylase activity"/>
    <property type="evidence" value="ECO:0007669"/>
    <property type="project" value="UniProtKB-UniRule"/>
</dbReference>
<dbReference type="GO" id="GO:0009853">
    <property type="term" value="P:photorespiration"/>
    <property type="evidence" value="ECO:0007669"/>
    <property type="project" value="UniProtKB-KW"/>
</dbReference>
<dbReference type="GO" id="GO:0019253">
    <property type="term" value="P:reductive pentose-phosphate cycle"/>
    <property type="evidence" value="ECO:0007669"/>
    <property type="project" value="UniProtKB-UniRule"/>
</dbReference>
<dbReference type="CDD" id="cd08212">
    <property type="entry name" value="RuBisCO_large_I"/>
    <property type="match status" value="1"/>
</dbReference>
<dbReference type="FunFam" id="3.20.20.110:FF:000001">
    <property type="entry name" value="Ribulose bisphosphate carboxylase large chain"/>
    <property type="match status" value="1"/>
</dbReference>
<dbReference type="FunFam" id="3.30.70.150:FF:000001">
    <property type="entry name" value="Ribulose bisphosphate carboxylase large chain"/>
    <property type="match status" value="1"/>
</dbReference>
<dbReference type="Gene3D" id="3.20.20.110">
    <property type="entry name" value="Ribulose bisphosphate carboxylase, large subunit, C-terminal domain"/>
    <property type="match status" value="1"/>
</dbReference>
<dbReference type="Gene3D" id="3.30.70.150">
    <property type="entry name" value="RuBisCO large subunit, N-terminal domain"/>
    <property type="match status" value="1"/>
</dbReference>
<dbReference type="HAMAP" id="MF_01338">
    <property type="entry name" value="RuBisCO_L_type1"/>
    <property type="match status" value="1"/>
</dbReference>
<dbReference type="InterPro" id="IPR033966">
    <property type="entry name" value="RuBisCO"/>
</dbReference>
<dbReference type="InterPro" id="IPR020878">
    <property type="entry name" value="RuBisCo_large_chain_AS"/>
</dbReference>
<dbReference type="InterPro" id="IPR000685">
    <property type="entry name" value="RuBisCO_lsu_C"/>
</dbReference>
<dbReference type="InterPro" id="IPR036376">
    <property type="entry name" value="RuBisCO_lsu_C_sf"/>
</dbReference>
<dbReference type="InterPro" id="IPR017443">
    <property type="entry name" value="RuBisCO_lsu_fd_N"/>
</dbReference>
<dbReference type="InterPro" id="IPR036422">
    <property type="entry name" value="RuBisCO_lsu_N_sf"/>
</dbReference>
<dbReference type="InterPro" id="IPR020888">
    <property type="entry name" value="RuBisCO_lsuI"/>
</dbReference>
<dbReference type="NCBIfam" id="NF003252">
    <property type="entry name" value="PRK04208.1"/>
    <property type="match status" value="1"/>
</dbReference>
<dbReference type="PANTHER" id="PTHR42704">
    <property type="entry name" value="RIBULOSE BISPHOSPHATE CARBOXYLASE"/>
    <property type="match status" value="1"/>
</dbReference>
<dbReference type="PANTHER" id="PTHR42704:SF17">
    <property type="entry name" value="RIBULOSE BISPHOSPHATE CARBOXYLASE LARGE CHAIN"/>
    <property type="match status" value="1"/>
</dbReference>
<dbReference type="Pfam" id="PF00016">
    <property type="entry name" value="RuBisCO_large"/>
    <property type="match status" value="1"/>
</dbReference>
<dbReference type="Pfam" id="PF02788">
    <property type="entry name" value="RuBisCO_large_N"/>
    <property type="match status" value="1"/>
</dbReference>
<dbReference type="SFLD" id="SFLDG01052">
    <property type="entry name" value="RuBisCO"/>
    <property type="match status" value="1"/>
</dbReference>
<dbReference type="SFLD" id="SFLDS00014">
    <property type="entry name" value="RuBisCO"/>
    <property type="match status" value="1"/>
</dbReference>
<dbReference type="SFLD" id="SFLDG00301">
    <property type="entry name" value="RuBisCO-like_proteins"/>
    <property type="match status" value="1"/>
</dbReference>
<dbReference type="SUPFAM" id="SSF51649">
    <property type="entry name" value="RuBisCo, C-terminal domain"/>
    <property type="match status" value="1"/>
</dbReference>
<dbReference type="SUPFAM" id="SSF54966">
    <property type="entry name" value="RuBisCO, large subunit, small (N-terminal) domain"/>
    <property type="match status" value="1"/>
</dbReference>
<dbReference type="PROSITE" id="PS00157">
    <property type="entry name" value="RUBISCO_LARGE"/>
    <property type="match status" value="1"/>
</dbReference>
<geneLocation type="chloroplast"/>
<keyword id="KW-0007">Acetylation</keyword>
<keyword id="KW-0113">Calvin cycle</keyword>
<keyword id="KW-0120">Carbon dioxide fixation</keyword>
<keyword id="KW-0150">Chloroplast</keyword>
<keyword id="KW-0903">Direct protein sequencing</keyword>
<keyword id="KW-1015">Disulfide bond</keyword>
<keyword id="KW-0456">Lyase</keyword>
<keyword id="KW-0460">Magnesium</keyword>
<keyword id="KW-0479">Metal-binding</keyword>
<keyword id="KW-0488">Methylation</keyword>
<keyword id="KW-0503">Monooxygenase</keyword>
<keyword id="KW-0560">Oxidoreductase</keyword>
<keyword id="KW-0601">Photorespiration</keyword>
<keyword id="KW-0602">Photosynthesis</keyword>
<keyword id="KW-0934">Plastid</keyword>
<evidence type="ECO:0000250" key="1"/>
<evidence type="ECO:0000269" key="2">
    <source>
    </source>
</evidence>
<evidence type="ECO:0000305" key="3"/>